<organism>
    <name type="scientific">Mycobacterium tuberculosis (strain ATCC 25177 / H37Ra)</name>
    <dbReference type="NCBI Taxonomy" id="419947"/>
    <lineage>
        <taxon>Bacteria</taxon>
        <taxon>Bacillati</taxon>
        <taxon>Actinomycetota</taxon>
        <taxon>Actinomycetes</taxon>
        <taxon>Mycobacteriales</taxon>
        <taxon>Mycobacteriaceae</taxon>
        <taxon>Mycobacterium</taxon>
        <taxon>Mycobacterium tuberculosis complex</taxon>
    </lineage>
</organism>
<reference key="1">
    <citation type="journal article" date="2008" name="PLoS ONE">
        <title>Genetic basis of virulence attenuation revealed by comparative genomic analysis of Mycobacterium tuberculosis strain H37Ra versus H37Rv.</title>
        <authorList>
            <person name="Zheng H."/>
            <person name="Lu L."/>
            <person name="Wang B."/>
            <person name="Pu S."/>
            <person name="Zhang X."/>
            <person name="Zhu G."/>
            <person name="Shi W."/>
            <person name="Zhang L."/>
            <person name="Wang H."/>
            <person name="Wang S."/>
            <person name="Zhao G."/>
            <person name="Zhang Y."/>
        </authorList>
    </citation>
    <scope>NUCLEOTIDE SEQUENCE [LARGE SCALE GENOMIC DNA]</scope>
    <source>
        <strain>ATCC 25177 / H37Ra</strain>
    </source>
</reference>
<proteinExistence type="inferred from homology"/>
<evidence type="ECO:0000255" key="1">
    <source>
        <dbReference type="HAMAP-Rule" id="MF_01321"/>
    </source>
</evidence>
<evidence type="ECO:0000256" key="2">
    <source>
        <dbReference type="SAM" id="MobiDB-lite"/>
    </source>
</evidence>
<name>RPOB_MYCTA</name>
<accession>A5U052</accession>
<dbReference type="EC" id="2.7.7.6" evidence="1"/>
<dbReference type="EMBL" id="CP000611">
    <property type="protein sequence ID" value="ABQ72402.1"/>
    <property type="molecule type" value="Genomic_DNA"/>
</dbReference>
<dbReference type="EMDB" id="EMD-22886"/>
<dbReference type="EMDB" id="EMD-22887"/>
<dbReference type="EMDB" id="EMD-22888"/>
<dbReference type="EMDB" id="EMD-27935"/>
<dbReference type="EMDB" id="EMD-27938"/>
<dbReference type="EMDB" id="EMD-27942"/>
<dbReference type="EMDB" id="EMD-27944"/>
<dbReference type="EMDB" id="EMD-27956"/>
<dbReference type="SMR" id="A5U052"/>
<dbReference type="KEGG" id="mra:MRA_0676"/>
<dbReference type="eggNOG" id="COG0085">
    <property type="taxonomic scope" value="Bacteria"/>
</dbReference>
<dbReference type="HOGENOM" id="CLU_000524_4_1_11"/>
<dbReference type="Proteomes" id="UP000001988">
    <property type="component" value="Chromosome"/>
</dbReference>
<dbReference type="GO" id="GO:0000428">
    <property type="term" value="C:DNA-directed RNA polymerase complex"/>
    <property type="evidence" value="ECO:0007669"/>
    <property type="project" value="UniProtKB-KW"/>
</dbReference>
<dbReference type="GO" id="GO:0003677">
    <property type="term" value="F:DNA binding"/>
    <property type="evidence" value="ECO:0007669"/>
    <property type="project" value="UniProtKB-UniRule"/>
</dbReference>
<dbReference type="GO" id="GO:0003899">
    <property type="term" value="F:DNA-directed RNA polymerase activity"/>
    <property type="evidence" value="ECO:0007669"/>
    <property type="project" value="UniProtKB-UniRule"/>
</dbReference>
<dbReference type="GO" id="GO:0032549">
    <property type="term" value="F:ribonucleoside binding"/>
    <property type="evidence" value="ECO:0007669"/>
    <property type="project" value="InterPro"/>
</dbReference>
<dbReference type="GO" id="GO:0006351">
    <property type="term" value="P:DNA-templated transcription"/>
    <property type="evidence" value="ECO:0007669"/>
    <property type="project" value="UniProtKB-UniRule"/>
</dbReference>
<dbReference type="CDD" id="cd00653">
    <property type="entry name" value="RNA_pol_B_RPB2"/>
    <property type="match status" value="1"/>
</dbReference>
<dbReference type="FunFam" id="3.90.1800.10:FF:000005">
    <property type="entry name" value="DNA-directed RNA polymerase subunit beta"/>
    <property type="match status" value="1"/>
</dbReference>
<dbReference type="Gene3D" id="2.40.50.100">
    <property type="match status" value="1"/>
</dbReference>
<dbReference type="Gene3D" id="2.40.50.150">
    <property type="match status" value="1"/>
</dbReference>
<dbReference type="Gene3D" id="3.90.1100.10">
    <property type="match status" value="1"/>
</dbReference>
<dbReference type="Gene3D" id="2.30.150.10">
    <property type="entry name" value="DNA-directed RNA polymerase, beta subunit, external 1 domain"/>
    <property type="match status" value="1"/>
</dbReference>
<dbReference type="Gene3D" id="2.40.270.10">
    <property type="entry name" value="DNA-directed RNA polymerase, subunit 2, domain 6"/>
    <property type="match status" value="1"/>
</dbReference>
<dbReference type="Gene3D" id="3.90.1800.10">
    <property type="entry name" value="RNA polymerase alpha subunit dimerisation domain"/>
    <property type="match status" value="1"/>
</dbReference>
<dbReference type="Gene3D" id="3.90.1110.10">
    <property type="entry name" value="RNA polymerase Rpb2, domain 2"/>
    <property type="match status" value="1"/>
</dbReference>
<dbReference type="HAMAP" id="MF_01321">
    <property type="entry name" value="RNApol_bact_RpoB"/>
    <property type="match status" value="1"/>
</dbReference>
<dbReference type="InterPro" id="IPR042107">
    <property type="entry name" value="DNA-dir_RNA_pol_bsu_ext_1_sf"/>
</dbReference>
<dbReference type="InterPro" id="IPR019462">
    <property type="entry name" value="DNA-dir_RNA_pol_bsu_external_1"/>
</dbReference>
<dbReference type="InterPro" id="IPR015712">
    <property type="entry name" value="DNA-dir_RNA_pol_su2"/>
</dbReference>
<dbReference type="InterPro" id="IPR007120">
    <property type="entry name" value="DNA-dir_RNAP_su2_dom"/>
</dbReference>
<dbReference type="InterPro" id="IPR037033">
    <property type="entry name" value="DNA-dir_RNAP_su2_hyb_sf"/>
</dbReference>
<dbReference type="InterPro" id="IPR010243">
    <property type="entry name" value="RNA_pol_bsu_bac"/>
</dbReference>
<dbReference type="InterPro" id="IPR007121">
    <property type="entry name" value="RNA_pol_bsu_CS"/>
</dbReference>
<dbReference type="InterPro" id="IPR007644">
    <property type="entry name" value="RNA_pol_bsu_protrusion"/>
</dbReference>
<dbReference type="InterPro" id="IPR007642">
    <property type="entry name" value="RNA_pol_Rpb2_2"/>
</dbReference>
<dbReference type="InterPro" id="IPR037034">
    <property type="entry name" value="RNA_pol_Rpb2_2_sf"/>
</dbReference>
<dbReference type="InterPro" id="IPR007645">
    <property type="entry name" value="RNA_pol_Rpb2_3"/>
</dbReference>
<dbReference type="InterPro" id="IPR007641">
    <property type="entry name" value="RNA_pol_Rpb2_7"/>
</dbReference>
<dbReference type="InterPro" id="IPR014724">
    <property type="entry name" value="RNA_pol_RPB2_OB-fold"/>
</dbReference>
<dbReference type="NCBIfam" id="NF001616">
    <property type="entry name" value="PRK00405.1"/>
    <property type="match status" value="1"/>
</dbReference>
<dbReference type="NCBIfam" id="TIGR02013">
    <property type="entry name" value="rpoB"/>
    <property type="match status" value="1"/>
</dbReference>
<dbReference type="PANTHER" id="PTHR20856">
    <property type="entry name" value="DNA-DIRECTED RNA POLYMERASE I SUBUNIT 2"/>
    <property type="match status" value="1"/>
</dbReference>
<dbReference type="Pfam" id="PF04563">
    <property type="entry name" value="RNA_pol_Rpb2_1"/>
    <property type="match status" value="1"/>
</dbReference>
<dbReference type="Pfam" id="PF04561">
    <property type="entry name" value="RNA_pol_Rpb2_2"/>
    <property type="match status" value="1"/>
</dbReference>
<dbReference type="Pfam" id="PF04565">
    <property type="entry name" value="RNA_pol_Rpb2_3"/>
    <property type="match status" value="1"/>
</dbReference>
<dbReference type="Pfam" id="PF10385">
    <property type="entry name" value="RNA_pol_Rpb2_45"/>
    <property type="match status" value="1"/>
</dbReference>
<dbReference type="Pfam" id="PF00562">
    <property type="entry name" value="RNA_pol_Rpb2_6"/>
    <property type="match status" value="1"/>
</dbReference>
<dbReference type="Pfam" id="PF04560">
    <property type="entry name" value="RNA_pol_Rpb2_7"/>
    <property type="match status" value="1"/>
</dbReference>
<dbReference type="SUPFAM" id="SSF64484">
    <property type="entry name" value="beta and beta-prime subunits of DNA dependent RNA-polymerase"/>
    <property type="match status" value="1"/>
</dbReference>
<dbReference type="PROSITE" id="PS01166">
    <property type="entry name" value="RNA_POL_BETA"/>
    <property type="match status" value="1"/>
</dbReference>
<gene>
    <name evidence="1" type="primary">rpoB</name>
    <name type="ordered locus">MRA_0676</name>
</gene>
<keyword id="KW-0240">DNA-directed RNA polymerase</keyword>
<keyword id="KW-0548">Nucleotidyltransferase</keyword>
<keyword id="KW-1185">Reference proteome</keyword>
<keyword id="KW-0804">Transcription</keyword>
<keyword id="KW-0808">Transferase</keyword>
<feature type="chain" id="PRO_0000300353" description="DNA-directed RNA polymerase subunit beta">
    <location>
        <begin position="1"/>
        <end position="1177"/>
    </location>
</feature>
<feature type="region of interest" description="Disordered" evidence="2">
    <location>
        <begin position="1"/>
        <end position="36"/>
    </location>
</feature>
<feature type="compositionally biased region" description="Low complexity" evidence="2">
    <location>
        <begin position="17"/>
        <end position="32"/>
    </location>
</feature>
<comment type="function">
    <text evidence="1">DNA-dependent RNA polymerase catalyzes the transcription of DNA into RNA using the four ribonucleoside triphosphates as substrates.</text>
</comment>
<comment type="catalytic activity">
    <reaction evidence="1">
        <text>RNA(n) + a ribonucleoside 5'-triphosphate = RNA(n+1) + diphosphate</text>
        <dbReference type="Rhea" id="RHEA:21248"/>
        <dbReference type="Rhea" id="RHEA-COMP:14527"/>
        <dbReference type="Rhea" id="RHEA-COMP:17342"/>
        <dbReference type="ChEBI" id="CHEBI:33019"/>
        <dbReference type="ChEBI" id="CHEBI:61557"/>
        <dbReference type="ChEBI" id="CHEBI:140395"/>
        <dbReference type="EC" id="2.7.7.6"/>
    </reaction>
</comment>
<comment type="subunit">
    <text evidence="1">The RNAP catalytic core consists of 2 alpha, 1 beta, 1 beta' and 1 omega subunit. When a sigma factor is associated with the core the holoenzyme is formed, which can initiate transcription.</text>
</comment>
<comment type="similarity">
    <text evidence="1">Belongs to the RNA polymerase beta chain family.</text>
</comment>
<sequence length="1177" mass="129752">MEGCILADSRQSKTAASPSPSRPQSSSNNSVPGAPNRVSFAKLREPLEVPGLLDVQTDSFEWLIGSPRWRESAAERGDVNPVGGLEEVLYELSPIEDFSGSMSLSFSDPRFDDVKAPVDECKDKDMTYAAPLFVTAEFINNNTGEIKSQTVFMGDFPMMTEKGTFIINGTERVVVSQLVRSPGVYFDETIDKSTDKTLHSVKVIPSRGAWLEFDVDKRDTVGVRIDRKRRQPVTVLLKALGWTSEQIVERFGFSEIMRSTLEKDNTVGTDEALLDIYRKLRPGEPPTKESAQTLLENLFFKEKRYDLARVGRYKVNKKLGLHVGEPITSSTLTEEDVVATIEYLVRLHEGQTTMTVPGGVEVPVETDDIDHFGNRRLRTVGELIQNQIRVGMSRMERVVRERMTTQDVEAITPQTLINIRPVVAAIKEFFGTSQLSQFMDQNNPLSGLTHKRRLSALGPGGLSRERAGLEVRDVHPSHYGRMCPIETPEGPNIGLIGSLSVYARVNPFGFIETPYRKVVDGVVSDEIVYLTADEEDRHVVAQANSPIDADGRFVEPRVLVRRKAGEVEYVPSSEVDYMDVSPRQMVSVATAMIPFLEHDDANRALMGANMQRQAVPLVRSEAPLVGTGMELRAAIDAGDVVVAEESGVIEEVSADYITVMHDNGTRRTYRMRKFARSNHGTCANQCPIVDAGDRVEAGQVIADGPCTDDGEMALGKNLLVAIMPWEGHNYEDAIILSNRLVEEDVLTSIHIEEHEIDARDTKLGAEEITRDIPNISDEVLADLDERGIVRIGAEVRDGDILVGKVTPKGETELTPEERLLRAIFGEKAREVRDTSLKVPHGESGKVIGIRVFSREDEDELPAGVNELVRVYVAQKRKISDGDKLAGRHGNKGVIGKILPVEDMPFLADGTPVDIILNTHGVPRRMNIGQILETHLGWCAHSGWKVDAAKGVPDWAARLPDELLEAQPNAIVSTPVFDGAQEAELQGLLSCTLPNRDGDVLVDADGKAMLFDGRSGEPFPYPVTVGYMYIMKLHHLVDDKIHARSTGPYSMITQQPLGGKAQFGGQRFGEMECWAMQAYGAAYTLQELLTIKSDDTVGRVKVYEAIVKGENIPEPGIPESFKVLLKELQSLCLNVEVLSSDGAAIELREGEDEDLERAAANLGINLSRNESASVEDLA</sequence>
<protein>
    <recommendedName>
        <fullName evidence="1">DNA-directed RNA polymerase subunit beta</fullName>
        <shortName evidence="1">RNAP subunit beta</shortName>
        <ecNumber evidence="1">2.7.7.6</ecNumber>
    </recommendedName>
    <alternativeName>
        <fullName evidence="1">RNA polymerase subunit beta</fullName>
    </alternativeName>
    <alternativeName>
        <fullName evidence="1">Transcriptase subunit beta</fullName>
    </alternativeName>
</protein>